<dbReference type="EC" id="3.5.1.108" evidence="1"/>
<dbReference type="EMBL" id="CP000025">
    <property type="protein sequence ID" value="AAW34722.1"/>
    <property type="molecule type" value="Genomic_DNA"/>
</dbReference>
<dbReference type="RefSeq" id="WP_002869857.1">
    <property type="nucleotide sequence ID" value="NC_003912.7"/>
</dbReference>
<dbReference type="SMR" id="Q5HX34"/>
<dbReference type="KEGG" id="cjr:CJE0127"/>
<dbReference type="HOGENOM" id="CLU_046528_1_0_7"/>
<dbReference type="UniPathway" id="UPA00359">
    <property type="reaction ID" value="UER00478"/>
</dbReference>
<dbReference type="GO" id="GO:0016020">
    <property type="term" value="C:membrane"/>
    <property type="evidence" value="ECO:0007669"/>
    <property type="project" value="GOC"/>
</dbReference>
<dbReference type="GO" id="GO:0046872">
    <property type="term" value="F:metal ion binding"/>
    <property type="evidence" value="ECO:0007669"/>
    <property type="project" value="UniProtKB-KW"/>
</dbReference>
<dbReference type="GO" id="GO:0103117">
    <property type="term" value="F:UDP-3-O-acyl-N-acetylglucosamine deacetylase activity"/>
    <property type="evidence" value="ECO:0007669"/>
    <property type="project" value="UniProtKB-UniRule"/>
</dbReference>
<dbReference type="GO" id="GO:0009245">
    <property type="term" value="P:lipid A biosynthetic process"/>
    <property type="evidence" value="ECO:0007669"/>
    <property type="project" value="UniProtKB-UniRule"/>
</dbReference>
<dbReference type="Gene3D" id="3.30.230.20">
    <property type="entry name" value="lpxc deacetylase, domain 1"/>
    <property type="match status" value="1"/>
</dbReference>
<dbReference type="Gene3D" id="3.30.1700.10">
    <property type="entry name" value="lpxc deacetylase, domain 2"/>
    <property type="match status" value="1"/>
</dbReference>
<dbReference type="HAMAP" id="MF_00388">
    <property type="entry name" value="LpxC"/>
    <property type="match status" value="1"/>
</dbReference>
<dbReference type="InterPro" id="IPR020568">
    <property type="entry name" value="Ribosomal_Su5_D2-typ_SF"/>
</dbReference>
<dbReference type="InterPro" id="IPR004463">
    <property type="entry name" value="UDP-acyl_GlcNac_deAcase"/>
</dbReference>
<dbReference type="InterPro" id="IPR011334">
    <property type="entry name" value="UDP-acyl_GlcNac_deAcase_C"/>
</dbReference>
<dbReference type="InterPro" id="IPR015870">
    <property type="entry name" value="UDP-acyl_N-AcGlcN_deAcase_N"/>
</dbReference>
<dbReference type="NCBIfam" id="TIGR00325">
    <property type="entry name" value="lpxC"/>
    <property type="match status" value="1"/>
</dbReference>
<dbReference type="PANTHER" id="PTHR33694">
    <property type="entry name" value="UDP-3-O-ACYL-N-ACETYLGLUCOSAMINE DEACETYLASE 1, MITOCHONDRIAL-RELATED"/>
    <property type="match status" value="1"/>
</dbReference>
<dbReference type="PANTHER" id="PTHR33694:SF1">
    <property type="entry name" value="UDP-3-O-ACYL-N-ACETYLGLUCOSAMINE DEACETYLASE 1, MITOCHONDRIAL-RELATED"/>
    <property type="match status" value="1"/>
</dbReference>
<dbReference type="Pfam" id="PF03331">
    <property type="entry name" value="LpxC"/>
    <property type="match status" value="1"/>
</dbReference>
<dbReference type="SUPFAM" id="SSF54211">
    <property type="entry name" value="Ribosomal protein S5 domain 2-like"/>
    <property type="match status" value="2"/>
</dbReference>
<evidence type="ECO:0000255" key="1">
    <source>
        <dbReference type="HAMAP-Rule" id="MF_00388"/>
    </source>
</evidence>
<feature type="chain" id="PRO_0000191922" description="UDP-3-O-acyl-N-acetylglucosamine deacetylase">
    <location>
        <begin position="1"/>
        <end position="294"/>
    </location>
</feature>
<feature type="active site" description="Proton donor" evidence="1">
    <location>
        <position position="259"/>
    </location>
</feature>
<feature type="binding site" evidence="1">
    <location>
        <position position="75"/>
    </location>
    <ligand>
        <name>Zn(2+)</name>
        <dbReference type="ChEBI" id="CHEBI:29105"/>
    </ligand>
</feature>
<feature type="binding site" evidence="1">
    <location>
        <position position="232"/>
    </location>
    <ligand>
        <name>Zn(2+)</name>
        <dbReference type="ChEBI" id="CHEBI:29105"/>
    </ligand>
</feature>
<feature type="binding site" evidence="1">
    <location>
        <position position="236"/>
    </location>
    <ligand>
        <name>Zn(2+)</name>
        <dbReference type="ChEBI" id="CHEBI:29105"/>
    </ligand>
</feature>
<sequence>MKQLTLAKTVKGVGIGLHKGEPIEITLEPLEANSGIVFFRSDLNASYKASPENVINTQMATVLGDERGFISTIEHLMSAINAYGIDNVRIVLNANEAPVMDGSSISFCMMLDEAGVKELDVPKKIMVIKKPIEVRDGNKFVRLTPTKEPRINYTIKFDNAVIGEQSYNFEFSKKNYIENIARARTFGFLKDVQALRSMNLALGGSLENTIVVDENRILNPEGLRFKDEFVRHKILDAIGDLTLLGYRVFGDYTSYAGSHHLNHLLTKEVLKDKDAYEIVSLEKTTQKAYEKVFA</sequence>
<proteinExistence type="inferred from homology"/>
<keyword id="KW-0378">Hydrolase</keyword>
<keyword id="KW-0441">Lipid A biosynthesis</keyword>
<keyword id="KW-0444">Lipid biosynthesis</keyword>
<keyword id="KW-0443">Lipid metabolism</keyword>
<keyword id="KW-0479">Metal-binding</keyword>
<keyword id="KW-0862">Zinc</keyword>
<protein>
    <recommendedName>
        <fullName evidence="1">UDP-3-O-acyl-N-acetylglucosamine deacetylase</fullName>
        <shortName evidence="1">UDP-3-O-acyl-GlcNAc deacetylase</shortName>
        <ecNumber evidence="1">3.5.1.108</ecNumber>
    </recommendedName>
    <alternativeName>
        <fullName evidence="1">UDP-3-O-[R-3-hydroxymyristoyl]-N-acetylglucosamine deacetylase</fullName>
    </alternativeName>
</protein>
<comment type="function">
    <text evidence="1">Catalyzes the hydrolysis of UDP-3-O-myristoyl-N-acetylglucosamine to form UDP-3-O-myristoylglucosamine and acetate, the committed step in lipid A biosynthesis.</text>
</comment>
<comment type="catalytic activity">
    <reaction evidence="1">
        <text>a UDP-3-O-[(3R)-3-hydroxyacyl]-N-acetyl-alpha-D-glucosamine + H2O = a UDP-3-O-[(3R)-3-hydroxyacyl]-alpha-D-glucosamine + acetate</text>
        <dbReference type="Rhea" id="RHEA:67816"/>
        <dbReference type="ChEBI" id="CHEBI:15377"/>
        <dbReference type="ChEBI" id="CHEBI:30089"/>
        <dbReference type="ChEBI" id="CHEBI:137740"/>
        <dbReference type="ChEBI" id="CHEBI:173225"/>
        <dbReference type="EC" id="3.5.1.108"/>
    </reaction>
</comment>
<comment type="cofactor">
    <cofactor evidence="1">
        <name>Zn(2+)</name>
        <dbReference type="ChEBI" id="CHEBI:29105"/>
    </cofactor>
</comment>
<comment type="pathway">
    <text evidence="1">Glycolipid biosynthesis; lipid IV(A) biosynthesis; lipid IV(A) from (3R)-3-hydroxytetradecanoyl-[acyl-carrier-protein] and UDP-N-acetyl-alpha-D-glucosamine: step 2/6.</text>
</comment>
<comment type="similarity">
    <text evidence="1">Belongs to the LpxC family.</text>
</comment>
<name>LPXC_CAMJR</name>
<accession>Q5HX34</accession>
<organism>
    <name type="scientific">Campylobacter jejuni (strain RM1221)</name>
    <dbReference type="NCBI Taxonomy" id="195099"/>
    <lineage>
        <taxon>Bacteria</taxon>
        <taxon>Pseudomonadati</taxon>
        <taxon>Campylobacterota</taxon>
        <taxon>Epsilonproteobacteria</taxon>
        <taxon>Campylobacterales</taxon>
        <taxon>Campylobacteraceae</taxon>
        <taxon>Campylobacter</taxon>
    </lineage>
</organism>
<gene>
    <name evidence="1" type="primary">lpxC</name>
    <name type="ordered locus">CJE0127</name>
</gene>
<reference key="1">
    <citation type="journal article" date="2005" name="PLoS Biol.">
        <title>Major structural differences and novel potential virulence mechanisms from the genomes of multiple Campylobacter species.</title>
        <authorList>
            <person name="Fouts D.E."/>
            <person name="Mongodin E.F."/>
            <person name="Mandrell R.E."/>
            <person name="Miller W.G."/>
            <person name="Rasko D.A."/>
            <person name="Ravel J."/>
            <person name="Brinkac L.M."/>
            <person name="DeBoy R.T."/>
            <person name="Parker C.T."/>
            <person name="Daugherty S.C."/>
            <person name="Dodson R.J."/>
            <person name="Durkin A.S."/>
            <person name="Madupu R."/>
            <person name="Sullivan S.A."/>
            <person name="Shetty J.U."/>
            <person name="Ayodeji M.A."/>
            <person name="Shvartsbeyn A."/>
            <person name="Schatz M.C."/>
            <person name="Badger J.H."/>
            <person name="Fraser C.M."/>
            <person name="Nelson K.E."/>
        </authorList>
    </citation>
    <scope>NUCLEOTIDE SEQUENCE [LARGE SCALE GENOMIC DNA]</scope>
    <source>
        <strain>RM1221</strain>
    </source>
</reference>